<dbReference type="EC" id="2.4.2.4" evidence="1"/>
<dbReference type="EMBL" id="CP000948">
    <property type="protein sequence ID" value="ACB05310.1"/>
    <property type="molecule type" value="Genomic_DNA"/>
</dbReference>
<dbReference type="RefSeq" id="WP_000477807.1">
    <property type="nucleotide sequence ID" value="NC_010473.1"/>
</dbReference>
<dbReference type="SMR" id="B1XFJ2"/>
<dbReference type="KEGG" id="ecd:ECDH10B_4540"/>
<dbReference type="HOGENOM" id="CLU_025040_0_1_6"/>
<dbReference type="UniPathway" id="UPA00578">
    <property type="reaction ID" value="UER00638"/>
</dbReference>
<dbReference type="GO" id="GO:0005829">
    <property type="term" value="C:cytosol"/>
    <property type="evidence" value="ECO:0007669"/>
    <property type="project" value="TreeGrafter"/>
</dbReference>
<dbReference type="GO" id="GO:0004645">
    <property type="term" value="F:1,4-alpha-oligoglucan phosphorylase activity"/>
    <property type="evidence" value="ECO:0007669"/>
    <property type="project" value="InterPro"/>
</dbReference>
<dbReference type="GO" id="GO:0009032">
    <property type="term" value="F:thymidine phosphorylase activity"/>
    <property type="evidence" value="ECO:0007669"/>
    <property type="project" value="UniProtKB-UniRule"/>
</dbReference>
<dbReference type="GO" id="GO:0006206">
    <property type="term" value="P:pyrimidine nucleobase metabolic process"/>
    <property type="evidence" value="ECO:0007669"/>
    <property type="project" value="InterPro"/>
</dbReference>
<dbReference type="GO" id="GO:0046104">
    <property type="term" value="P:thymidine metabolic process"/>
    <property type="evidence" value="ECO:0007669"/>
    <property type="project" value="UniProtKB-UniRule"/>
</dbReference>
<dbReference type="FunFam" id="3.40.1030.10:FF:000001">
    <property type="entry name" value="Thymidine phosphorylase"/>
    <property type="match status" value="1"/>
</dbReference>
<dbReference type="FunFam" id="3.90.1170.30:FF:000001">
    <property type="entry name" value="Thymidine phosphorylase"/>
    <property type="match status" value="1"/>
</dbReference>
<dbReference type="Gene3D" id="3.40.1030.10">
    <property type="entry name" value="Nucleoside phosphorylase/phosphoribosyltransferase catalytic domain"/>
    <property type="match status" value="1"/>
</dbReference>
<dbReference type="Gene3D" id="3.90.1170.30">
    <property type="entry name" value="Pyrimidine nucleoside phosphorylase-like, C-terminal domain"/>
    <property type="match status" value="1"/>
</dbReference>
<dbReference type="Gene3D" id="1.20.970.10">
    <property type="entry name" value="Transferase, Pyrimidine Nucleoside Phosphorylase, Chain C"/>
    <property type="match status" value="1"/>
</dbReference>
<dbReference type="HAMAP" id="MF_01628">
    <property type="entry name" value="Thymid_phosp"/>
    <property type="match status" value="1"/>
</dbReference>
<dbReference type="InterPro" id="IPR000312">
    <property type="entry name" value="Glycosyl_Trfase_fam3"/>
</dbReference>
<dbReference type="InterPro" id="IPR017459">
    <property type="entry name" value="Glycosyl_Trfase_fam3_N_dom"/>
</dbReference>
<dbReference type="InterPro" id="IPR036320">
    <property type="entry name" value="Glycosyl_Trfase_fam3_N_dom_sf"/>
</dbReference>
<dbReference type="InterPro" id="IPR035902">
    <property type="entry name" value="Nuc_phospho_transferase"/>
</dbReference>
<dbReference type="InterPro" id="IPR036566">
    <property type="entry name" value="PYNP-like_C_sf"/>
</dbReference>
<dbReference type="InterPro" id="IPR013102">
    <property type="entry name" value="PYNP_C"/>
</dbReference>
<dbReference type="InterPro" id="IPR018090">
    <property type="entry name" value="Pyrmidine_PPas_bac/euk"/>
</dbReference>
<dbReference type="InterPro" id="IPR017872">
    <property type="entry name" value="Pyrmidine_PPase_CS"/>
</dbReference>
<dbReference type="InterPro" id="IPR000053">
    <property type="entry name" value="Thymidine/pyrmidine_PPase"/>
</dbReference>
<dbReference type="InterPro" id="IPR013465">
    <property type="entry name" value="Thymidine_Pase"/>
</dbReference>
<dbReference type="NCBIfam" id="NF004490">
    <property type="entry name" value="PRK05820.1"/>
    <property type="match status" value="1"/>
</dbReference>
<dbReference type="NCBIfam" id="TIGR02643">
    <property type="entry name" value="T_phosphoryl"/>
    <property type="match status" value="1"/>
</dbReference>
<dbReference type="NCBIfam" id="TIGR02644">
    <property type="entry name" value="Y_phosphoryl"/>
    <property type="match status" value="1"/>
</dbReference>
<dbReference type="PANTHER" id="PTHR10515">
    <property type="entry name" value="THYMIDINE PHOSPHORYLASE"/>
    <property type="match status" value="1"/>
</dbReference>
<dbReference type="PANTHER" id="PTHR10515:SF0">
    <property type="entry name" value="THYMIDINE PHOSPHORYLASE"/>
    <property type="match status" value="1"/>
</dbReference>
<dbReference type="Pfam" id="PF02885">
    <property type="entry name" value="Glycos_trans_3N"/>
    <property type="match status" value="1"/>
</dbReference>
<dbReference type="Pfam" id="PF00591">
    <property type="entry name" value="Glycos_transf_3"/>
    <property type="match status" value="1"/>
</dbReference>
<dbReference type="Pfam" id="PF07831">
    <property type="entry name" value="PYNP_C"/>
    <property type="match status" value="1"/>
</dbReference>
<dbReference type="PIRSF" id="PIRSF000478">
    <property type="entry name" value="TP_PyNP"/>
    <property type="match status" value="1"/>
</dbReference>
<dbReference type="SMART" id="SM00941">
    <property type="entry name" value="PYNP_C"/>
    <property type="match status" value="1"/>
</dbReference>
<dbReference type="SUPFAM" id="SSF52418">
    <property type="entry name" value="Nucleoside phosphorylase/phosphoribosyltransferase catalytic domain"/>
    <property type="match status" value="1"/>
</dbReference>
<dbReference type="SUPFAM" id="SSF47648">
    <property type="entry name" value="Nucleoside phosphorylase/phosphoribosyltransferase N-terminal domain"/>
    <property type="match status" value="1"/>
</dbReference>
<dbReference type="SUPFAM" id="SSF54680">
    <property type="entry name" value="Pyrimidine nucleoside phosphorylase C-terminal domain"/>
    <property type="match status" value="1"/>
</dbReference>
<dbReference type="PROSITE" id="PS00647">
    <property type="entry name" value="THYMID_PHOSPHORYLASE"/>
    <property type="match status" value="1"/>
</dbReference>
<organism>
    <name type="scientific">Escherichia coli (strain K12 / DH10B)</name>
    <dbReference type="NCBI Taxonomy" id="316385"/>
    <lineage>
        <taxon>Bacteria</taxon>
        <taxon>Pseudomonadati</taxon>
        <taxon>Pseudomonadota</taxon>
        <taxon>Gammaproteobacteria</taxon>
        <taxon>Enterobacterales</taxon>
        <taxon>Enterobacteriaceae</taxon>
        <taxon>Escherichia</taxon>
    </lineage>
</organism>
<protein>
    <recommendedName>
        <fullName evidence="1">Thymidine phosphorylase</fullName>
        <ecNumber evidence="1">2.4.2.4</ecNumber>
    </recommendedName>
    <alternativeName>
        <fullName evidence="1">TdRPase</fullName>
    </alternativeName>
</protein>
<proteinExistence type="inferred from homology"/>
<comment type="function">
    <text evidence="1">The enzymes which catalyze the reversible phosphorolysis of pyrimidine nucleosides are involved in the degradation of these compounds and in their utilization as carbon and energy sources, or in the rescue of pyrimidine bases for nucleotide synthesis.</text>
</comment>
<comment type="catalytic activity">
    <reaction evidence="1">
        <text>thymidine + phosphate = 2-deoxy-alpha-D-ribose 1-phosphate + thymine</text>
        <dbReference type="Rhea" id="RHEA:16037"/>
        <dbReference type="ChEBI" id="CHEBI:17748"/>
        <dbReference type="ChEBI" id="CHEBI:17821"/>
        <dbReference type="ChEBI" id="CHEBI:43474"/>
        <dbReference type="ChEBI" id="CHEBI:57259"/>
        <dbReference type="EC" id="2.4.2.4"/>
    </reaction>
</comment>
<comment type="pathway">
    <text evidence="1">Pyrimidine metabolism; dTMP biosynthesis via salvage pathway; dTMP from thymine: step 1/2.</text>
</comment>
<comment type="subunit">
    <text evidence="1">Homodimer.</text>
</comment>
<comment type="similarity">
    <text evidence="1">Belongs to the thymidine/pyrimidine-nucleoside phosphorylase family.</text>
</comment>
<evidence type="ECO:0000255" key="1">
    <source>
        <dbReference type="HAMAP-Rule" id="MF_01628"/>
    </source>
</evidence>
<gene>
    <name evidence="1" type="primary">deoA</name>
    <name type="ordered locus">ECDH10B_4540</name>
</gene>
<sequence length="440" mass="47207">MFLAQEIIRKKRDGHALSDEEIRFFINGIRDNTISEGQIAALAMTIFFHDMTMPERVSLTMAMRDSGTVLDWKSLHLNGPIVDKHSTGGVGDVTSLMLGPMVAACGGYIPMISGRGLGHTGGTLDKLESIPGFDIFPDDNRFREIIKDVGVAIIGQTSSLAPADKRFYATRDITATVDSIPLITASILAKKLAEGLDALVMDVKVGSGAFMPTYELSEALAEAIVGVANGAGVRTTALLTDMNQVLASSAGNAVEVREAVQFLTGEYRNPRLFDVTMALCVEMLISGKLAKDDAEARAKLQAVLDNGKAAEVFGRMVAAQKGPTDFVENYAKYLPTAMLTKAVYADTEGFVSEMDTRALGMAVVAMGGGRRQASDTIDYSVGFTDMARLGDQVDGQRPLAVIHAKDENNWQEAAKAVKAAIKLADKAPESTPTVYRRISE</sequence>
<keyword id="KW-0328">Glycosyltransferase</keyword>
<keyword id="KW-0808">Transferase</keyword>
<name>TYPH_ECODH</name>
<accession>B1XFJ2</accession>
<feature type="chain" id="PRO_1000186256" description="Thymidine phosphorylase">
    <location>
        <begin position="1"/>
        <end position="440"/>
    </location>
</feature>
<reference key="1">
    <citation type="journal article" date="2008" name="J. Bacteriol.">
        <title>The complete genome sequence of Escherichia coli DH10B: insights into the biology of a laboratory workhorse.</title>
        <authorList>
            <person name="Durfee T."/>
            <person name="Nelson R."/>
            <person name="Baldwin S."/>
            <person name="Plunkett G. III"/>
            <person name="Burland V."/>
            <person name="Mau B."/>
            <person name="Petrosino J.F."/>
            <person name="Qin X."/>
            <person name="Muzny D.M."/>
            <person name="Ayele M."/>
            <person name="Gibbs R.A."/>
            <person name="Csorgo B."/>
            <person name="Posfai G."/>
            <person name="Weinstock G.M."/>
            <person name="Blattner F.R."/>
        </authorList>
    </citation>
    <scope>NUCLEOTIDE SEQUENCE [LARGE SCALE GENOMIC DNA]</scope>
    <source>
        <strain>K12 / DH10B</strain>
    </source>
</reference>